<comment type="function">
    <text evidence="1">Asymmetrically hydrolyzes Ap4p to yield AMP and ATP.</text>
</comment>
<comment type="catalytic activity">
    <reaction evidence="1">
        <text>P(1),P(4)-bis(5'-guanosyl) tetraphosphate + H2O = GMP + GTP + 2 H(+)</text>
        <dbReference type="Rhea" id="RHEA:22484"/>
        <dbReference type="ChEBI" id="CHEBI:15377"/>
        <dbReference type="ChEBI" id="CHEBI:15378"/>
        <dbReference type="ChEBI" id="CHEBI:37565"/>
        <dbReference type="ChEBI" id="CHEBI:57553"/>
        <dbReference type="ChEBI" id="CHEBI:58115"/>
        <dbReference type="EC" id="3.6.1.17"/>
    </reaction>
</comment>
<comment type="cofactor">
    <cofactor evidence="1">
        <name>Ni(2+)</name>
        <dbReference type="ChEBI" id="CHEBI:49786"/>
    </cofactor>
</comment>
<comment type="similarity">
    <text evidence="1">Belongs to the PrpE family.</text>
</comment>
<protein>
    <recommendedName>
        <fullName evidence="1">Bis(5'-nucleosyl)-tetraphosphatase PrpE [asymmetrical]</fullName>
        <ecNumber evidence="1">3.6.1.17</ecNumber>
    </recommendedName>
    <alternativeName>
        <fullName evidence="1">Ap4A hydrolase</fullName>
    </alternativeName>
    <alternativeName>
        <fullName evidence="1">Diadenosine 5',5'''-P1,P4-tetraphosphate asymmetrical hydrolase</fullName>
        <shortName evidence="1">Diadenosine tetraphosphatase</shortName>
    </alternativeName>
</protein>
<evidence type="ECO:0000255" key="1">
    <source>
        <dbReference type="HAMAP-Rule" id="MF_01443"/>
    </source>
</evidence>
<feature type="chain" id="PRO_1000184943" description="Bis(5'-nucleosyl)-tetraphosphatase PrpE [asymmetrical]">
    <location>
        <begin position="1"/>
        <end position="246"/>
    </location>
</feature>
<sequence length="246" mass="28271">MKYDIIGDIHGCLQEFQNLTEKLGYNWSSGLPVHPDQRKLAFVGDITDRGPHSLRMIEIVWELVIHKKEAYYAPGNHCNKLYRFFLGRNVTVAHGLETTVAEYEALPSHKQNMIKEKFITLYEQSPLYHVLDEKRLLVCHAGIRQDYIGRQDKKVQTFVLYGDITGEKHADGSPVRRDWAKEYKGTTWIVYGHTPVKEPRFVNHTVNIDTGAVFGGRLTALRYPEMETVSVPSSLPFVPEKFRPIS</sequence>
<keyword id="KW-0342">GTP-binding</keyword>
<keyword id="KW-0378">Hydrolase</keyword>
<keyword id="KW-0533">Nickel</keyword>
<keyword id="KW-0547">Nucleotide-binding</keyword>
<accession>C1ELB5</accession>
<organism>
    <name type="scientific">Bacillus cereus (strain 03BB102)</name>
    <dbReference type="NCBI Taxonomy" id="572264"/>
    <lineage>
        <taxon>Bacteria</taxon>
        <taxon>Bacillati</taxon>
        <taxon>Bacillota</taxon>
        <taxon>Bacilli</taxon>
        <taxon>Bacillales</taxon>
        <taxon>Bacillaceae</taxon>
        <taxon>Bacillus</taxon>
        <taxon>Bacillus cereus group</taxon>
    </lineage>
</organism>
<name>PRPE_BACC3</name>
<gene>
    <name evidence="1" type="primary">prpE</name>
    <name type="ordered locus">BCA_1247</name>
</gene>
<reference key="1">
    <citation type="submission" date="2009-02" db="EMBL/GenBank/DDBJ databases">
        <title>Genome sequence of Bacillus cereus 03BB102.</title>
        <authorList>
            <person name="Dodson R.J."/>
            <person name="Jackson P."/>
            <person name="Munk A.C."/>
            <person name="Brettin T."/>
            <person name="Bruce D."/>
            <person name="Detter C."/>
            <person name="Tapia R."/>
            <person name="Han C."/>
            <person name="Sutton G."/>
            <person name="Sims D."/>
        </authorList>
    </citation>
    <scope>NUCLEOTIDE SEQUENCE [LARGE SCALE GENOMIC DNA]</scope>
    <source>
        <strain>03BB102</strain>
    </source>
</reference>
<proteinExistence type="inferred from homology"/>
<dbReference type="EC" id="3.6.1.17" evidence="1"/>
<dbReference type="EMBL" id="CP001407">
    <property type="protein sequence ID" value="ACO30259.1"/>
    <property type="molecule type" value="Genomic_DNA"/>
</dbReference>
<dbReference type="RefSeq" id="WP_000872718.1">
    <property type="nucleotide sequence ID" value="NC_012472.1"/>
</dbReference>
<dbReference type="SMR" id="C1ELB5"/>
<dbReference type="KEGG" id="bcx:BCA_1247"/>
<dbReference type="PATRIC" id="fig|572264.18.peg.1198"/>
<dbReference type="Proteomes" id="UP000002210">
    <property type="component" value="Chromosome"/>
</dbReference>
<dbReference type="GO" id="GO:0005737">
    <property type="term" value="C:cytoplasm"/>
    <property type="evidence" value="ECO:0007669"/>
    <property type="project" value="TreeGrafter"/>
</dbReference>
<dbReference type="GO" id="GO:0004081">
    <property type="term" value="F:bis(5'-nucleosyl)-tetraphosphatase (asymmetrical) activity"/>
    <property type="evidence" value="ECO:0007669"/>
    <property type="project" value="UniProtKB-UniRule"/>
</dbReference>
<dbReference type="GO" id="GO:0005525">
    <property type="term" value="F:GTP binding"/>
    <property type="evidence" value="ECO:0007669"/>
    <property type="project" value="UniProtKB-KW"/>
</dbReference>
<dbReference type="GO" id="GO:0016151">
    <property type="term" value="F:nickel cation binding"/>
    <property type="evidence" value="ECO:0007669"/>
    <property type="project" value="UniProtKB-UniRule"/>
</dbReference>
<dbReference type="GO" id="GO:0016791">
    <property type="term" value="F:phosphatase activity"/>
    <property type="evidence" value="ECO:0007669"/>
    <property type="project" value="TreeGrafter"/>
</dbReference>
<dbReference type="CDD" id="cd07423">
    <property type="entry name" value="MPP_Prp_like"/>
    <property type="match status" value="1"/>
</dbReference>
<dbReference type="Gene3D" id="3.60.21.10">
    <property type="match status" value="1"/>
</dbReference>
<dbReference type="HAMAP" id="MF_01443">
    <property type="entry name" value="PrpE"/>
    <property type="match status" value="1"/>
</dbReference>
<dbReference type="InterPro" id="IPR050126">
    <property type="entry name" value="Ap4A_hydrolase"/>
</dbReference>
<dbReference type="InterPro" id="IPR023937">
    <property type="entry name" value="Bis(5'-nucleosyl)-tetraP_PrpE"/>
</dbReference>
<dbReference type="InterPro" id="IPR004843">
    <property type="entry name" value="Calcineurin-like_PHP_ApaH"/>
</dbReference>
<dbReference type="InterPro" id="IPR029052">
    <property type="entry name" value="Metallo-depent_PP-like"/>
</dbReference>
<dbReference type="InterPro" id="IPR041780">
    <property type="entry name" value="MPP_PrpE-like"/>
</dbReference>
<dbReference type="NCBIfam" id="NF010148">
    <property type="entry name" value="PRK13625.1"/>
    <property type="match status" value="1"/>
</dbReference>
<dbReference type="PANTHER" id="PTHR42850:SF7">
    <property type="entry name" value="BIS(5'-NUCLEOSYL)-TETRAPHOSPHATASE PRPE [ASYMMETRICAL]"/>
    <property type="match status" value="1"/>
</dbReference>
<dbReference type="PANTHER" id="PTHR42850">
    <property type="entry name" value="METALLOPHOSPHOESTERASE"/>
    <property type="match status" value="1"/>
</dbReference>
<dbReference type="Pfam" id="PF00149">
    <property type="entry name" value="Metallophos"/>
    <property type="match status" value="1"/>
</dbReference>
<dbReference type="SUPFAM" id="SSF56300">
    <property type="entry name" value="Metallo-dependent phosphatases"/>
    <property type="match status" value="1"/>
</dbReference>